<proteinExistence type="evidence at protein level"/>
<keyword id="KW-0106">Calcium</keyword>
<keyword id="KW-1015">Disulfide bond</keyword>
<keyword id="KW-0456">Lyase</keyword>
<keyword id="KW-0479">Metal-binding</keyword>
<keyword id="KW-1185">Reference proteome</keyword>
<keyword id="KW-0964">Secreted</keyword>
<keyword id="KW-0732">Signal</keyword>
<accession>T2KNC2</accession>
<evidence type="ECO:0000250" key="1">
    <source>
        <dbReference type="UniProtKB" id="A0A084JZF2"/>
    </source>
</evidence>
<evidence type="ECO:0000250" key="2">
    <source>
        <dbReference type="UniProtKB" id="G8G2V6"/>
    </source>
</evidence>
<evidence type="ECO:0000255" key="3"/>
<evidence type="ECO:0000269" key="4">
    <source>
    </source>
</evidence>
<evidence type="ECO:0000269" key="5">
    <source>
    </source>
</evidence>
<evidence type="ECO:0000269" key="6">
    <source ref="2"/>
</evidence>
<evidence type="ECO:0000303" key="7">
    <source>
    </source>
</evidence>
<evidence type="ECO:0000303" key="8">
    <source>
    </source>
</evidence>
<evidence type="ECO:0000305" key="9"/>
<evidence type="ECO:0000305" key="10">
    <source>
    </source>
</evidence>
<evidence type="ECO:0000305" key="11">
    <source>
    </source>
</evidence>
<evidence type="ECO:0000305" key="12">
    <source ref="2"/>
</evidence>
<reference key="1">
    <citation type="journal article" date="2013" name="Appl. Environ. Microbiol.">
        <title>The genome of the alga-associated marine flavobacterium Formosa agariphila KMM 3901T reveals a broad potential for degradation of algal polysaccharides.</title>
        <authorList>
            <person name="Mann A.J."/>
            <person name="Hahnke R.L."/>
            <person name="Huang S."/>
            <person name="Werner J."/>
            <person name="Xing P."/>
            <person name="Barbeyron T."/>
            <person name="Huettel B."/>
            <person name="Stueber K."/>
            <person name="Reinhardt R."/>
            <person name="Harder J."/>
            <person name="Gloeckner F.O."/>
            <person name="Amann R.I."/>
            <person name="Teeling H."/>
        </authorList>
    </citation>
    <scope>NUCLEOTIDE SEQUENCE [LARGE SCALE GENOMIC DNA]</scope>
    <source>
        <strain>DSM 15362 / KCTC 12365 / LMG 23005 / KMM 3901 / M-2Alg 35-1</strain>
    </source>
</reference>
<reference key="2">
    <citation type="journal article" date="2017" name="Algal Res.">
        <title>The enzymatic ulvan depolymerisation system from the alga-associated marine flavobacterium Formosa agariphila.</title>
        <authorList>
            <person name="Salinas A."/>
            <person name="French C.E."/>
        </authorList>
    </citation>
    <scope>REVISION OF GENE MODEL</scope>
    <scope>FUNCTION</scope>
    <scope>SUBCELLULAR LOCATION</scope>
</reference>
<reference key="3">
    <citation type="journal article" date="2018" name="Appl. Microbiol. Biotechnol.">
        <title>Biochemical characterization of an ulvan lyase from the marine flavobacterium Formosa agariphila KMM 3901T.</title>
        <authorList>
            <person name="Reisky L."/>
            <person name="Stanetty C."/>
            <person name="Mihovilovic M.D."/>
            <person name="Schweder T."/>
            <person name="Hehemann J.H."/>
            <person name="Bornscheuer U.T."/>
        </authorList>
    </citation>
    <scope>FUNCTION</scope>
    <scope>CATALYTIC ACTIVITY</scope>
    <scope>BIOPHYSICOCHEMICAL PROPERTIES</scope>
    <scope>COFACTOR</scope>
    <scope>SUBCELLULAR LOCATION</scope>
    <source>
        <strain>DSM 15362 / KCTC 12365 / LMG 23005 / KMM 3901 / M-2Alg 35-1</strain>
    </source>
</reference>
<reference key="4">
    <citation type="journal article" date="2019" name="Nat. Chem. Biol.">
        <title>A marine bacterial enzymatic cascade degrades the algal polysaccharide ulvan.</title>
        <authorList>
            <person name="Reisky L."/>
            <person name="Prechoux A."/>
            <person name="Zuehlke M.K."/>
            <person name="Baeumgen M."/>
            <person name="Robb C.S."/>
            <person name="Gerlach N."/>
            <person name="Roret T."/>
            <person name="Stanetty C."/>
            <person name="Larocque R."/>
            <person name="Michel G."/>
            <person name="Song T."/>
            <person name="Markert S."/>
            <person name="Unfried F."/>
            <person name="Mihovilovic M.D."/>
            <person name="Trautwein-Schult A."/>
            <person name="Becher D."/>
            <person name="Schweder T."/>
            <person name="Bornscheuer U.T."/>
            <person name="Hehemann J.H."/>
        </authorList>
    </citation>
    <scope>FUNCTION</scope>
    <scope>CATALYTIC ACTIVITY</scope>
    <scope>SUBCELLULAR LOCATION</scope>
    <scope>INDUCTION</scope>
</reference>
<organism>
    <name type="scientific">Formosa agariphila (strain DSM 15362 / KCTC 12365 / LMG 23005 / KMM 3901 / M-2Alg 35-1)</name>
    <dbReference type="NCBI Taxonomy" id="1347342"/>
    <lineage>
        <taxon>Bacteria</taxon>
        <taxon>Pseudomonadati</taxon>
        <taxon>Bacteroidota</taxon>
        <taxon>Flavobacteriia</taxon>
        <taxon>Flavobacteriales</taxon>
        <taxon>Flavobacteriaceae</taxon>
        <taxon>Formosa</taxon>
    </lineage>
</organism>
<dbReference type="EC" id="4.2.2.-" evidence="4 5"/>
<dbReference type="EMBL" id="HG315671">
    <property type="protein sequence ID" value="CDF79931.1"/>
    <property type="status" value="ALT_INIT"/>
    <property type="molecule type" value="Genomic_DNA"/>
</dbReference>
<dbReference type="RefSeq" id="WP_038530530.1">
    <property type="nucleotide sequence ID" value="NZ_HG315671.1"/>
</dbReference>
<dbReference type="SMR" id="T2KNC2"/>
<dbReference type="STRING" id="1347342.BN863_22190"/>
<dbReference type="PATRIC" id="fig|1347342.6.peg.2226"/>
<dbReference type="eggNOG" id="ENOG502ZBB6">
    <property type="taxonomic scope" value="Bacteria"/>
</dbReference>
<dbReference type="HOGENOM" id="CLU_544861_0_0_10"/>
<dbReference type="OrthoDB" id="1415098at2"/>
<dbReference type="SABIO-RK" id="T2KNC2"/>
<dbReference type="Proteomes" id="UP000016160">
    <property type="component" value="Chromosome"/>
</dbReference>
<dbReference type="GO" id="GO:0005576">
    <property type="term" value="C:extracellular region"/>
    <property type="evidence" value="ECO:0007669"/>
    <property type="project" value="UniProtKB-SubCell"/>
</dbReference>
<dbReference type="GO" id="GO:0016829">
    <property type="term" value="F:lyase activity"/>
    <property type="evidence" value="ECO:0007669"/>
    <property type="project" value="UniProtKB-KW"/>
</dbReference>
<dbReference type="GO" id="GO:0046872">
    <property type="term" value="F:metal ion binding"/>
    <property type="evidence" value="ECO:0007669"/>
    <property type="project" value="UniProtKB-KW"/>
</dbReference>
<dbReference type="Gene3D" id="2.80.10.50">
    <property type="match status" value="1"/>
</dbReference>
<dbReference type="InterPro" id="IPR057036">
    <property type="entry name" value="Beta-tre_PLH30"/>
</dbReference>
<dbReference type="InterPro" id="IPR054591">
    <property type="entry name" value="PL28"/>
</dbReference>
<dbReference type="InterPro" id="IPR035992">
    <property type="entry name" value="Ricin_B-like_lectins"/>
</dbReference>
<dbReference type="InterPro" id="IPR026444">
    <property type="entry name" value="Secre_tail"/>
</dbReference>
<dbReference type="NCBIfam" id="TIGR04183">
    <property type="entry name" value="Por_Secre_tail"/>
    <property type="match status" value="1"/>
</dbReference>
<dbReference type="Pfam" id="PF24208">
    <property type="entry name" value="Beta-tre_PLH30"/>
    <property type="match status" value="1"/>
</dbReference>
<dbReference type="Pfam" id="PF22826">
    <property type="entry name" value="PL28"/>
    <property type="match status" value="1"/>
</dbReference>
<dbReference type="Pfam" id="PF18962">
    <property type="entry name" value="Por_Secre_tail"/>
    <property type="match status" value="1"/>
</dbReference>
<dbReference type="SUPFAM" id="SSF50370">
    <property type="entry name" value="Ricin B-like lectins"/>
    <property type="match status" value="1"/>
</dbReference>
<comment type="function">
    <text evidence="4 5 6 11 12">Ulvan lyase involved in ulvan degradation (Ref.2). Ulvan is the main polysaccharide component of the Ulvales (green seaweed) cell wall. It is composed of disaccharide building blocks comprising 3-sulfated rhamnose (Rha3S) linked to D-glucuronic acid (GlcA), L-iduronic acid (IduA), or D-xylose (Xyl) (Probable). Ulvan lyase catalyzes the endolytic cleavage of the glycosidic bond between Rha3S and the uronic acids GlcA or IduA, producing oligosaccharides that have unsaturated 4-deoxy-L-threo-hex-4-enopyranosiduronic acid (deltaUA) at the non-reducing end. This results eventually in the degradation of the ulvan polysaccharide into deltaUA-Rha3S disaccharides and deltaUA-Rha3S-Xyl-Rha3S tetrasaccharides (PubMed:29948117, PubMed:31285597).</text>
</comment>
<comment type="cofactor">
    <cofactor evidence="4">
        <name>Ca(2+)</name>
        <dbReference type="ChEBI" id="CHEBI:29108"/>
    </cofactor>
</comment>
<comment type="biophysicochemical properties">
    <kinetics>
        <KM evidence="4">0.26 mg/ml for ulvan (at 100 mM NaCl)</KM>
        <KM evidence="4">0.75 mg/ml for ulvan (at 600 mM NaCl)</KM>
        <text evidence="4">kcat is 24.8 sec(-1) with ulvan as substrate (at 100 mM NaCl) and 20.1 sec(-1) with ulvan as substrate (at 600 mM NaCl).</text>
    </kinetics>
    <phDependence>
        <text evidence="4">Optimum pH is 8.5.</text>
    </phDependence>
    <temperatureDependence>
        <text evidence="4">Optimum temperature is 29.5 degrees Celsius.</text>
    </temperatureDependence>
</comment>
<comment type="subcellular location">
    <subcellularLocation>
        <location evidence="11">Secreted</location>
    </subcellularLocation>
    <text evidence="10 12">Secreted via the type IX secretion system (T9SS).</text>
</comment>
<comment type="induction">
    <text evidence="5">By ulvan and rhamnose.</text>
</comment>
<comment type="domain">
    <text evidence="2">The ulvan-binding domain binds strongly to ulvan, it does not bind other polymers like alginate, heparin, dextran sulfate or iota carrageenan. Presumably it serves to anchor the enzyme at the substrate, thus improving catalysis. Notably, the catalytic domain alone is more active than the full-length enzyme with the binding domain attached. Possibly, the ulvan-binding domain helps the enzyme to act on ulvan in its insoluble form embedded in the algal cell wall.</text>
</comment>
<comment type="similarity">
    <text evidence="9">Belongs to the polysaccharide lyase 28 family.</text>
</comment>
<comment type="sequence caution" evidence="12">
    <conflict type="erroneous initiation">
        <sequence resource="EMBL-CDS" id="CDF79931"/>
    </conflict>
    <text>Truncated N-terminus.</text>
</comment>
<gene>
    <name type="ORF">BN863_22190</name>
</gene>
<protein>
    <recommendedName>
        <fullName evidence="9">Endo-acting ulvan lyase</fullName>
        <ecNumber evidence="4 5">4.2.2.-</ecNumber>
    </recommendedName>
    <alternativeName>
        <fullName evidence="7">Endolytic ulvan lyase</fullName>
    </alternativeName>
    <alternativeName>
        <fullName evidence="9">Polysaccharide lyase 28 family protein P30</fullName>
        <shortName evidence="8">P30_PL28</shortName>
    </alternativeName>
    <alternativeName>
        <fullName evidence="8">Polysaccharide utilization locus H protein P30</fullName>
        <shortName>PUL H protein P30</shortName>
    </alternativeName>
</protein>
<name>PLH30_FORAG</name>
<sequence>MLEKTTLKNIILIHFLMFLAVVTAQTAPDEDTSAITRCTAEGTNPVRETDIPNPVNVGTIDDRSCYANYKESTVYGKTWGVYNITFDSNDFDTSLQPRIERSLSRSSETGIGSYARLTGVFRILEVGDTSGTSQDGTYLAQAKGKHTGGGGSPDPAICLYLAKPVYGTGEDADKQVSFDIYAERILYRGGEGDGREIVFLKNVKKDEETNFELEVGFKEDPNDVSKKIQYCNAVIGGDTFNWNIPEPERGTESGIRYGAYRVKGGRAQIRWANTTYQKVENVEVTNPGPIGDVYKLKNVATGQYLSDSGVSASAVIMSDSGEAQNNYWTFVESGSLFNIDNETFGILRAPGAGGPGGAYVVVSTTKEGPSSDGDKVWTIHYNESNDTYRFESGSSGRFMYQEINGNVTHISAMNTDDRSVWKAIAVESLSVDENAILASDVRVFPNPASDSFTISLKTINHVTVNIYDVLGNTIFKSEFNGDTIQIRNKGQFKAGVYLIQLTDKNNNKYHKKLIVK</sequence>
<feature type="signal peptide" evidence="3">
    <location>
        <begin position="1"/>
        <end position="24"/>
    </location>
</feature>
<feature type="chain" id="PRO_0000448327" description="Endo-acting ulvan lyase">
    <location>
        <begin position="25"/>
        <end position="429"/>
    </location>
</feature>
<feature type="propeptide" id="PRO_0000448328" description="Removed by the type IX secretion system (T9SS)" evidence="3 10">
    <location>
        <begin position="430"/>
        <end position="516"/>
    </location>
</feature>
<feature type="region of interest" description="Ulvan-binding domain" evidence="2">
    <location>
        <begin position="289"/>
        <end position="429"/>
    </location>
</feature>
<feature type="active site" description="Proton acceptor" evidence="1">
    <location>
        <position position="143"/>
    </location>
</feature>
<feature type="active site" description="Proton donor/acceptor" evidence="1">
    <location>
        <position position="260"/>
    </location>
</feature>
<feature type="binding site" evidence="1">
    <location>
        <position position="42"/>
    </location>
    <ligand>
        <name>Ca(2+)</name>
        <dbReference type="ChEBI" id="CHEBI:29108"/>
        <note>structural</note>
    </ligand>
</feature>
<feature type="binding site" evidence="1">
    <location>
        <position position="44"/>
    </location>
    <ligand>
        <name>Ca(2+)</name>
        <dbReference type="ChEBI" id="CHEBI:29108"/>
        <note>structural</note>
    </ligand>
</feature>
<feature type="binding site" evidence="1">
    <location>
        <position position="62"/>
    </location>
    <ligand>
        <name>Ca(2+)</name>
        <dbReference type="ChEBI" id="CHEBI:29108"/>
        <note>structural</note>
    </ligand>
</feature>
<feature type="binding site" evidence="1">
    <location>
        <position position="64"/>
    </location>
    <ligand>
        <name>Ca(2+)</name>
        <dbReference type="ChEBI" id="CHEBI:29108"/>
        <note>structural</note>
    </ligand>
</feature>
<feature type="binding site" evidence="1">
    <location>
        <position position="67"/>
    </location>
    <ligand>
        <name>Ca(2+)</name>
        <dbReference type="ChEBI" id="CHEBI:29108"/>
        <note>structural</note>
    </ligand>
</feature>
<feature type="binding site" evidence="1">
    <location>
        <position position="68"/>
    </location>
    <ligand>
        <name>Ca(2+)</name>
        <dbReference type="ChEBI" id="CHEBI:29108"/>
        <note>structural</note>
    </ligand>
</feature>
<feature type="binding site" evidence="1">
    <location>
        <position position="138"/>
    </location>
    <ligand>
        <name>substrate</name>
    </ligand>
</feature>
<feature type="binding site" evidence="1">
    <location>
        <begin position="191"/>
        <end position="195"/>
    </location>
    <ligand>
        <name>substrate</name>
    </ligand>
</feature>
<feature type="binding site" evidence="1">
    <location>
        <begin position="260"/>
        <end position="263"/>
    </location>
    <ligand>
        <name>substrate</name>
    </ligand>
</feature>
<feature type="site" description="Neutralizes the sugar carboxylate group at subsite +1" evidence="1">
    <location>
        <position position="141"/>
    </location>
</feature>
<feature type="disulfide bond" evidence="1">
    <location>
        <begin position="38"/>
        <end position="65"/>
    </location>
</feature>